<accession>Q9MB95</accession>
<evidence type="ECO:0000250" key="1"/>
<evidence type="ECO:0000305" key="2"/>
<feature type="chain" id="PRO_0000123918" description="1-aminocyclopropane-1-carboxylate synthase 1">
    <location>
        <begin position="1"/>
        <end position="492"/>
    </location>
</feature>
<feature type="modified residue" description="N6-(pyridoxal phosphate)lysine" evidence="1">
    <location>
        <position position="277"/>
    </location>
</feature>
<proteinExistence type="evidence at transcript level"/>
<gene>
    <name type="primary">ACS1</name>
</gene>
<organism>
    <name type="scientific">Prunus mume</name>
    <name type="common">Japanese apricot</name>
    <name type="synonym">Armeniaca mume</name>
    <dbReference type="NCBI Taxonomy" id="102107"/>
    <lineage>
        <taxon>Eukaryota</taxon>
        <taxon>Viridiplantae</taxon>
        <taxon>Streptophyta</taxon>
        <taxon>Embryophyta</taxon>
        <taxon>Tracheophyta</taxon>
        <taxon>Spermatophyta</taxon>
        <taxon>Magnoliopsida</taxon>
        <taxon>eudicotyledons</taxon>
        <taxon>Gunneridae</taxon>
        <taxon>Pentapetalae</taxon>
        <taxon>rosids</taxon>
        <taxon>fabids</taxon>
        <taxon>Rosales</taxon>
        <taxon>Rosaceae</taxon>
        <taxon>Amygdaloideae</taxon>
        <taxon>Amygdaleae</taxon>
        <taxon>Prunus</taxon>
    </lineage>
</organism>
<keyword id="KW-0266">Ethylene biosynthesis</keyword>
<keyword id="KW-0292">Fruit ripening</keyword>
<keyword id="KW-0456">Lyase</keyword>
<keyword id="KW-0663">Pyridoxal phosphate</keyword>
<keyword id="KW-0949">S-adenosyl-L-methionine</keyword>
<sequence length="492" mass="55066">MGSSSATANRFLLSKIATSEGHGENSPYFDGWKAYDRNPFHPTKNPEGVIQMGLAENQLSFDSIEDWIKKNPKASICTPEGVEEFKNVAIFQDYHGFPEFRKAVAMFMSKARGGRVTFDPNRVVMSGGATGANELVMFCLADPGDAFLVPSPYYPAFFRDLGWRTGVQIVPVDCDSSNNFKITKEALEAAYEKAQKNNINVKGLIITNPSNPLGTTLDRNTLESLVEFINQKNIHLVCDEIYAATVFSSPTFTCISEVIQNMNCNPNLIHIVYSLSKDMGLPGLRVGIVYSYNDDVVNIGRKMSSFGLVSSQTQHMLPSMLLDEEFVARFLETSPKRLAKRHGVFTKGLEEVGINCLKSNAGLFCWMDLRRLLEDQTFDGEMVLWRVIVNEVGPNVSPGSSFKCVEPGWFRVCFANMDDETLEVALKRIRTFVRQGKKAQDQVVQVKSPKRWKSNLRLSFSSSSTRRFDQESVNVLSPHMMSPHSPLVRAKT</sequence>
<comment type="function">
    <text>Catalyzes the formation of 1-aminocyclopropane-1-carboxylate, a direct precursor of ethylene in higher plants.</text>
</comment>
<comment type="catalytic activity">
    <reaction>
        <text>S-adenosyl-L-methionine = 1-aminocyclopropane-1-carboxylate + S-methyl-5'-thioadenosine + H(+)</text>
        <dbReference type="Rhea" id="RHEA:21744"/>
        <dbReference type="ChEBI" id="CHEBI:15378"/>
        <dbReference type="ChEBI" id="CHEBI:17509"/>
        <dbReference type="ChEBI" id="CHEBI:58360"/>
        <dbReference type="ChEBI" id="CHEBI:59789"/>
        <dbReference type="EC" id="4.4.1.14"/>
    </reaction>
</comment>
<comment type="cofactor">
    <cofactor>
        <name>pyridoxal 5'-phosphate</name>
        <dbReference type="ChEBI" id="CHEBI:597326"/>
    </cofactor>
</comment>
<comment type="pathway">
    <text>Alkene biosynthesis; ethylene biosynthesis via S-adenosyl-L-methionine; ethylene from S-adenosyl-L-methionine: step 1/2.</text>
</comment>
<comment type="subunit">
    <text evidence="1">Homodimer.</text>
</comment>
<comment type="similarity">
    <text evidence="2">Belongs to the class-I pyridoxal-phosphate-dependent aminotransferase family.</text>
</comment>
<dbReference type="EC" id="4.4.1.14"/>
<dbReference type="EMBL" id="AB031026">
    <property type="protein sequence ID" value="BAA90549.1"/>
    <property type="molecule type" value="mRNA"/>
</dbReference>
<dbReference type="SMR" id="Q9MB95"/>
<dbReference type="UniPathway" id="UPA00384">
    <property type="reaction ID" value="UER00562"/>
</dbReference>
<dbReference type="Proteomes" id="UP000694861">
    <property type="component" value="Unplaced"/>
</dbReference>
<dbReference type="GO" id="GO:0016847">
    <property type="term" value="F:1-aminocyclopropane-1-carboxylate synthase activity"/>
    <property type="evidence" value="ECO:0007669"/>
    <property type="project" value="UniProtKB-EC"/>
</dbReference>
<dbReference type="GO" id="GO:0030170">
    <property type="term" value="F:pyridoxal phosphate binding"/>
    <property type="evidence" value="ECO:0007669"/>
    <property type="project" value="InterPro"/>
</dbReference>
<dbReference type="GO" id="GO:0008483">
    <property type="term" value="F:transaminase activity"/>
    <property type="evidence" value="ECO:0007669"/>
    <property type="project" value="TreeGrafter"/>
</dbReference>
<dbReference type="GO" id="GO:0009693">
    <property type="term" value="P:ethylene biosynthetic process"/>
    <property type="evidence" value="ECO:0007669"/>
    <property type="project" value="UniProtKB-UniPathway"/>
</dbReference>
<dbReference type="GO" id="GO:0009835">
    <property type="term" value="P:fruit ripening"/>
    <property type="evidence" value="ECO:0007669"/>
    <property type="project" value="UniProtKB-KW"/>
</dbReference>
<dbReference type="CDD" id="cd00609">
    <property type="entry name" value="AAT_like"/>
    <property type="match status" value="1"/>
</dbReference>
<dbReference type="Gene3D" id="3.90.1150.10">
    <property type="entry name" value="Aspartate Aminotransferase, domain 1"/>
    <property type="match status" value="1"/>
</dbReference>
<dbReference type="Gene3D" id="3.40.640.10">
    <property type="entry name" value="Type I PLP-dependent aspartate aminotransferase-like (Major domain)"/>
    <property type="match status" value="1"/>
</dbReference>
<dbReference type="InterPro" id="IPR004839">
    <property type="entry name" value="Aminotransferase_I/II_large"/>
</dbReference>
<dbReference type="InterPro" id="IPR050478">
    <property type="entry name" value="Ethylene_sulfur-biosynth"/>
</dbReference>
<dbReference type="InterPro" id="IPR004838">
    <property type="entry name" value="NHTrfase_class1_PyrdxlP-BS"/>
</dbReference>
<dbReference type="InterPro" id="IPR015424">
    <property type="entry name" value="PyrdxlP-dep_Trfase"/>
</dbReference>
<dbReference type="InterPro" id="IPR015421">
    <property type="entry name" value="PyrdxlP-dep_Trfase_major"/>
</dbReference>
<dbReference type="InterPro" id="IPR015422">
    <property type="entry name" value="PyrdxlP-dep_Trfase_small"/>
</dbReference>
<dbReference type="PANTHER" id="PTHR43795:SF74">
    <property type="entry name" value="1-AMINOCYCLOPROPANE-1-CARBOXYLATE SYNTHASE-LIKE PROTEIN 1"/>
    <property type="match status" value="1"/>
</dbReference>
<dbReference type="PANTHER" id="PTHR43795">
    <property type="entry name" value="BIFUNCTIONAL ASPARTATE AMINOTRANSFERASE AND GLUTAMATE/ASPARTATE-PREPHENATE AMINOTRANSFERASE-RELATED"/>
    <property type="match status" value="1"/>
</dbReference>
<dbReference type="Pfam" id="PF00155">
    <property type="entry name" value="Aminotran_1_2"/>
    <property type="match status" value="1"/>
</dbReference>
<dbReference type="PRINTS" id="PR00753">
    <property type="entry name" value="ACCSYNTHASE"/>
</dbReference>
<dbReference type="SUPFAM" id="SSF53383">
    <property type="entry name" value="PLP-dependent transferases"/>
    <property type="match status" value="1"/>
</dbReference>
<dbReference type="PROSITE" id="PS00105">
    <property type="entry name" value="AA_TRANSFER_CLASS_1"/>
    <property type="match status" value="1"/>
</dbReference>
<name>1A11_PRUMU</name>
<protein>
    <recommendedName>
        <fullName>1-aminocyclopropane-1-carboxylate synthase 1</fullName>
        <shortName>ACC synthase 1</shortName>
        <ecNumber>4.4.1.14</ecNumber>
    </recommendedName>
    <alternativeName>
        <fullName>S-adenosyl-L-methionine methylthioadenosine-lyase</fullName>
    </alternativeName>
</protein>
<reference key="1">
    <citation type="journal article" date="1999" name="Physiol. Plantarum">
        <title>Expression of ACC synthase is enhanced earlier than that of ACC oxidase during fruit ripening of mume (Prunus mume).</title>
        <authorList>
            <person name="Mita S."/>
            <person name="Kirita C."/>
            <person name="Kato M."/>
            <person name="Hyodo H."/>
        </authorList>
    </citation>
    <scope>NUCLEOTIDE SEQUENCE [MRNA]</scope>
</reference>